<comment type="function">
    <text>Acts in concert with the pectinesterase, in the ripening process. Is involved in cell wall metabolism, specifically in polyuronide degradation.</text>
</comment>
<comment type="catalytic activity">
    <reaction>
        <text>(1,4-alpha-D-galacturonosyl)n+m + H2O = (1,4-alpha-D-galacturonosyl)n + (1,4-alpha-D-galacturonosyl)m.</text>
        <dbReference type="EC" id="3.2.1.15"/>
    </reaction>
</comment>
<comment type="subcellular location">
    <subcellularLocation>
        <location>Secreted</location>
    </subcellularLocation>
    <subcellularLocation>
        <location>Secreted</location>
        <location>Cell wall</location>
    </subcellularLocation>
</comment>
<comment type="developmental stage">
    <text>In ripening fruit.</text>
</comment>
<comment type="similarity">
    <text evidence="3">Belongs to the glycosyl hydrolase 28 family.</text>
</comment>
<protein>
    <recommendedName>
        <fullName>Polygalacturonase</fullName>
        <shortName>PG</shortName>
        <ecNumber>3.2.1.15</ecNumber>
    </recommendedName>
    <alternativeName>
        <fullName>Pectinase</fullName>
    </alternativeName>
</protein>
<organism>
    <name type="scientific">Actinidia deliciosa</name>
    <name type="common">Kiwi</name>
    <dbReference type="NCBI Taxonomy" id="3627"/>
    <lineage>
        <taxon>Eukaryota</taxon>
        <taxon>Viridiplantae</taxon>
        <taxon>Streptophyta</taxon>
        <taxon>Embryophyta</taxon>
        <taxon>Tracheophyta</taxon>
        <taxon>Spermatophyta</taxon>
        <taxon>Magnoliopsida</taxon>
        <taxon>eudicotyledons</taxon>
        <taxon>Gunneridae</taxon>
        <taxon>Pentapetalae</taxon>
        <taxon>asterids</taxon>
        <taxon>Ericales</taxon>
        <taxon>Actinidiaceae</taxon>
        <taxon>Actinidia</taxon>
    </lineage>
</organism>
<proteinExistence type="evidence at transcript level"/>
<keyword id="KW-0134">Cell wall</keyword>
<keyword id="KW-0961">Cell wall biogenesis/degradation</keyword>
<keyword id="KW-0292">Fruit ripening</keyword>
<keyword id="KW-0325">Glycoprotein</keyword>
<keyword id="KW-0326">Glycosidase</keyword>
<keyword id="KW-0378">Hydrolase</keyword>
<keyword id="KW-0964">Secreted</keyword>
<keyword id="KW-0732">Signal</keyword>
<sequence length="467" mass="50776">MALQRRFFQFVIITLLIPSFILGYTSAVHEDPPHDYHLEEYGYDFKAYPSYITTIGDNDFGSSMSHENGIFGLRKVDYGMDRVLDASKTVNVDDFGAKGDGRDDTKAFEKAWKAACSSTSSAVLLVPKKNYLVRPISFSGPCKSGLTMQIYGTIEASDDRSDYRKDGRHWLVFDSVQNLRVEGGGTINGNGKIWWQNSCKTNKALPCKDAPTALTFYKSKHVIVKNLKIENAQQIHVSFDNCVNVQASNLMVTAPENSPNTDGIHVTGTQNIHISSCVIGTGDDCISIVNGSRKVRVNDITCGPGHGISIGSLGYGNSEAHVSDVVVNGAKLCGTTNGVRIKTWQGGSGSASNIKFQNVEMHNVENPIIIDQNYCDQDKPCQEQSSAVQVKNVVYQNIKGTCASNVAITFDCSKRFPCQGIVLEDVDLEIEGGAAAKALCNNVELSETGVVSPHCQEEGGEEEEEAS</sequence>
<reference key="1">
    <citation type="journal article" date="1993" name="Plant Physiol.">
        <title>A polygalacturonase gene from kiwifruit (Actinidia deliciosa).</title>
        <authorList>
            <person name="Atkinson R.G."/>
            <person name="Gardner R.C."/>
        </authorList>
    </citation>
    <scope>NUCLEOTIDE SEQUENCE [GENOMIC DNA]</scope>
    <source>
        <strain>cv. Hayward</strain>
    </source>
</reference>
<feature type="signal peptide" evidence="1">
    <location>
        <begin position="1"/>
        <end position="27"/>
    </location>
</feature>
<feature type="chain" id="PRO_0000024798" description="Polygalacturonase">
    <location>
        <begin position="28"/>
        <end position="467"/>
    </location>
</feature>
<feature type="active site" description="Proton donor" evidence="2">
    <location>
        <position position="283"/>
    </location>
</feature>
<feature type="active site" evidence="2">
    <location>
        <position position="306"/>
    </location>
</feature>
<feature type="glycosylation site" description="N-linked (GlcNAc...) asparagine" evidence="1">
    <location>
        <position position="290"/>
    </location>
</feature>
<name>PGLR_ACTDE</name>
<dbReference type="EC" id="3.2.1.15"/>
<dbReference type="EMBL" id="L12019">
    <property type="protein sequence ID" value="AAC14453.1"/>
    <property type="molecule type" value="Genomic_DNA"/>
</dbReference>
<dbReference type="SMR" id="P35336"/>
<dbReference type="CAZy" id="GH28">
    <property type="family name" value="Glycoside Hydrolase Family 28"/>
</dbReference>
<dbReference type="GO" id="GO:0005576">
    <property type="term" value="C:extracellular region"/>
    <property type="evidence" value="ECO:0007669"/>
    <property type="project" value="UniProtKB-SubCell"/>
</dbReference>
<dbReference type="GO" id="GO:0004650">
    <property type="term" value="F:polygalacturonase activity"/>
    <property type="evidence" value="ECO:0007669"/>
    <property type="project" value="UniProtKB-EC"/>
</dbReference>
<dbReference type="GO" id="GO:0005975">
    <property type="term" value="P:carbohydrate metabolic process"/>
    <property type="evidence" value="ECO:0007669"/>
    <property type="project" value="InterPro"/>
</dbReference>
<dbReference type="GO" id="GO:0071555">
    <property type="term" value="P:cell wall organization"/>
    <property type="evidence" value="ECO:0007669"/>
    <property type="project" value="UniProtKB-KW"/>
</dbReference>
<dbReference type="GO" id="GO:0009835">
    <property type="term" value="P:fruit ripening"/>
    <property type="evidence" value="ECO:0007669"/>
    <property type="project" value="UniProtKB-KW"/>
</dbReference>
<dbReference type="FunFam" id="2.160.20.10:FF:000028">
    <property type="entry name" value="Polygalacturonase QRT2"/>
    <property type="match status" value="1"/>
</dbReference>
<dbReference type="Gene3D" id="2.160.20.10">
    <property type="entry name" value="Single-stranded right-handed beta-helix, Pectin lyase-like"/>
    <property type="match status" value="1"/>
</dbReference>
<dbReference type="InterPro" id="IPR000743">
    <property type="entry name" value="Glyco_hydro_28"/>
</dbReference>
<dbReference type="InterPro" id="IPR006626">
    <property type="entry name" value="PbH1"/>
</dbReference>
<dbReference type="InterPro" id="IPR012334">
    <property type="entry name" value="Pectin_lyas_fold"/>
</dbReference>
<dbReference type="InterPro" id="IPR011050">
    <property type="entry name" value="Pectin_lyase_fold/virulence"/>
</dbReference>
<dbReference type="PANTHER" id="PTHR31375">
    <property type="match status" value="1"/>
</dbReference>
<dbReference type="Pfam" id="PF00295">
    <property type="entry name" value="Glyco_hydro_28"/>
    <property type="match status" value="1"/>
</dbReference>
<dbReference type="SMART" id="SM00710">
    <property type="entry name" value="PbH1"/>
    <property type="match status" value="4"/>
</dbReference>
<dbReference type="SUPFAM" id="SSF51126">
    <property type="entry name" value="Pectin lyase-like"/>
    <property type="match status" value="1"/>
</dbReference>
<dbReference type="PROSITE" id="PS00502">
    <property type="entry name" value="POLYGALACTURONASE"/>
    <property type="match status" value="1"/>
</dbReference>
<accession>P35336</accession>
<evidence type="ECO:0000255" key="1"/>
<evidence type="ECO:0000255" key="2">
    <source>
        <dbReference type="PROSITE-ProRule" id="PRU10052"/>
    </source>
</evidence>
<evidence type="ECO:0000305" key="3"/>